<gene>
    <name type="primary">miox</name>
    <name type="ORF">DDB_G0290161</name>
</gene>
<feature type="chain" id="PRO_0000328413" description="Inositol oxygenase">
    <location>
        <begin position="1"/>
        <end position="292"/>
    </location>
</feature>
<feature type="binding site" evidence="1">
    <location>
        <position position="33"/>
    </location>
    <ligand>
        <name>substrate</name>
    </ligand>
</feature>
<feature type="binding site" evidence="1">
    <location>
        <begin position="88"/>
        <end position="90"/>
    </location>
    <ligand>
        <name>substrate</name>
    </ligand>
</feature>
<feature type="binding site" evidence="1">
    <location>
        <position position="101"/>
    </location>
    <ligand>
        <name>Fe cation</name>
        <dbReference type="ChEBI" id="CHEBI:24875"/>
        <label>1</label>
    </ligand>
</feature>
<feature type="binding site" evidence="1">
    <location>
        <position position="128"/>
    </location>
    <ligand>
        <name>Fe cation</name>
        <dbReference type="ChEBI" id="CHEBI:24875"/>
        <label>1</label>
    </ligand>
</feature>
<feature type="binding site" evidence="1">
    <location>
        <position position="129"/>
    </location>
    <ligand>
        <name>Fe cation</name>
        <dbReference type="ChEBI" id="CHEBI:24875"/>
        <label>1</label>
    </ligand>
</feature>
<feature type="binding site" evidence="1">
    <location>
        <position position="129"/>
    </location>
    <ligand>
        <name>Fe cation</name>
        <dbReference type="ChEBI" id="CHEBI:24875"/>
        <label>2</label>
    </ligand>
</feature>
<feature type="binding site" evidence="1">
    <location>
        <position position="132"/>
    </location>
    <ligand>
        <name>substrate</name>
    </ligand>
</feature>
<feature type="binding site" evidence="1">
    <location>
        <begin position="149"/>
        <end position="150"/>
    </location>
    <ligand>
        <name>substrate</name>
    </ligand>
</feature>
<feature type="binding site" evidence="1">
    <location>
        <position position="201"/>
    </location>
    <ligand>
        <name>Fe cation</name>
        <dbReference type="ChEBI" id="CHEBI:24875"/>
        <label>2</label>
    </ligand>
</feature>
<feature type="binding site" evidence="1">
    <location>
        <begin position="227"/>
        <end position="228"/>
    </location>
    <ligand>
        <name>substrate</name>
    </ligand>
</feature>
<feature type="binding site" evidence="1">
    <location>
        <position position="227"/>
    </location>
    <ligand>
        <name>Fe cation</name>
        <dbReference type="ChEBI" id="CHEBI:24875"/>
        <label>2</label>
    </ligand>
</feature>
<feature type="binding site" evidence="1">
    <location>
        <position position="260"/>
    </location>
    <ligand>
        <name>Fe cation</name>
        <dbReference type="ChEBI" id="CHEBI:24875"/>
        <label>1</label>
    </ligand>
</feature>
<comment type="catalytic activity">
    <reaction>
        <text>myo-inositol + O2 = D-glucuronate + H2O + H(+)</text>
        <dbReference type="Rhea" id="RHEA:23696"/>
        <dbReference type="ChEBI" id="CHEBI:15377"/>
        <dbReference type="ChEBI" id="CHEBI:15378"/>
        <dbReference type="ChEBI" id="CHEBI:15379"/>
        <dbReference type="ChEBI" id="CHEBI:17268"/>
        <dbReference type="ChEBI" id="CHEBI:58720"/>
        <dbReference type="EC" id="1.13.99.1"/>
    </reaction>
</comment>
<comment type="cofactor">
    <cofactor evidence="1">
        <name>Fe cation</name>
        <dbReference type="ChEBI" id="CHEBI:24875"/>
    </cofactor>
    <text evidence="1">Binds 2 iron ions per subunit.</text>
</comment>
<comment type="pathway">
    <text>Polyol metabolism; myo-inositol degradation into D-glucuronate; D-glucuronate from myo-inositol: step 1/1.</text>
</comment>
<comment type="subcellular location">
    <subcellularLocation>
        <location evidence="1">Cytoplasm</location>
    </subcellularLocation>
</comment>
<comment type="similarity">
    <text evidence="2">Belongs to the myo-inositol oxygenase family.</text>
</comment>
<sequence>MIETRTTTSTSEIKHDNSLKTGFEITKEVEEFRNYENSEDRVSEAYRNSHTYQTYDYATEKKKQYSQLDTSIKMGLWEAAELLNTIIDESDPDSNIPQINHCLQTAEAIRKVYPDSKYDWFHLTGFIHDLGKVLLSKKFKEQPQWATVGDTFPLGCKFDESNIFYEFFKMNPDYNDSKYNSECGIYKKNIGLENVTMSWGHDEYFYLVCVGNKCLLPKESLYMIRFHSFYPWHRHNKYTHLTNEEDEKMLNWVKEFNKFDLYSKDSEPVDVESLKPYYQSLISKYFPNELHW</sequence>
<keyword id="KW-0963">Cytoplasm</keyword>
<keyword id="KW-0408">Iron</keyword>
<keyword id="KW-0479">Metal-binding</keyword>
<keyword id="KW-0560">Oxidoreductase</keyword>
<keyword id="KW-1185">Reference proteome</keyword>
<accession>Q54GH4</accession>
<dbReference type="EC" id="1.13.99.1"/>
<dbReference type="EMBL" id="AAFI02000158">
    <property type="protein sequence ID" value="EAL62352.1"/>
    <property type="molecule type" value="Genomic_DNA"/>
</dbReference>
<dbReference type="RefSeq" id="XP_635854.1">
    <property type="nucleotide sequence ID" value="XM_630762.1"/>
</dbReference>
<dbReference type="SMR" id="Q54GH4"/>
<dbReference type="FunCoup" id="Q54GH4">
    <property type="interactions" value="65"/>
</dbReference>
<dbReference type="STRING" id="44689.Q54GH4"/>
<dbReference type="PaxDb" id="44689-DDB0235367"/>
<dbReference type="EnsemblProtists" id="EAL62352">
    <property type="protein sequence ID" value="EAL62352"/>
    <property type="gene ID" value="DDB_G0290161"/>
</dbReference>
<dbReference type="GeneID" id="8627510"/>
<dbReference type="KEGG" id="ddi:DDB_G0290161"/>
<dbReference type="dictyBase" id="DDB_G0290161">
    <property type="gene designation" value="miox"/>
</dbReference>
<dbReference type="VEuPathDB" id="AmoebaDB:DDB_G0290161"/>
<dbReference type="eggNOG" id="KOG1573">
    <property type="taxonomic scope" value="Eukaryota"/>
</dbReference>
<dbReference type="HOGENOM" id="CLU_050259_1_0_1"/>
<dbReference type="InParanoid" id="Q54GH4"/>
<dbReference type="OMA" id="RYNTKYG"/>
<dbReference type="PhylomeDB" id="Q54GH4"/>
<dbReference type="Reactome" id="R-DDI-1855183">
    <property type="pathway name" value="Synthesis of IP2, IP, and Ins in the cytosol"/>
</dbReference>
<dbReference type="UniPathway" id="UPA00111">
    <property type="reaction ID" value="UER00527"/>
</dbReference>
<dbReference type="PRO" id="PR:Q54GH4"/>
<dbReference type="Proteomes" id="UP000002195">
    <property type="component" value="Chromosome 5"/>
</dbReference>
<dbReference type="GO" id="GO:0005737">
    <property type="term" value="C:cytoplasm"/>
    <property type="evidence" value="ECO:0007669"/>
    <property type="project" value="UniProtKB-SubCell"/>
</dbReference>
<dbReference type="GO" id="GO:0050113">
    <property type="term" value="F:inositol oxygenase activity"/>
    <property type="evidence" value="ECO:0000318"/>
    <property type="project" value="GO_Central"/>
</dbReference>
<dbReference type="GO" id="GO:0005506">
    <property type="term" value="F:iron ion binding"/>
    <property type="evidence" value="ECO:0007669"/>
    <property type="project" value="InterPro"/>
</dbReference>
<dbReference type="GO" id="GO:0016701">
    <property type="term" value="F:oxidoreductase activity, acting on single donors with incorporation of molecular oxygen"/>
    <property type="evidence" value="ECO:0000250"/>
    <property type="project" value="dictyBase"/>
</dbReference>
<dbReference type="GO" id="GO:0019310">
    <property type="term" value="P:inositol catabolic process"/>
    <property type="evidence" value="ECO:0000250"/>
    <property type="project" value="dictyBase"/>
</dbReference>
<dbReference type="InterPro" id="IPR007828">
    <property type="entry name" value="Inositol_oxygenase"/>
</dbReference>
<dbReference type="PANTHER" id="PTHR12588:SF0">
    <property type="entry name" value="INOSITOL OXYGENASE"/>
    <property type="match status" value="1"/>
</dbReference>
<dbReference type="PANTHER" id="PTHR12588">
    <property type="entry name" value="MYOINOSITOL OXYGENASE"/>
    <property type="match status" value="1"/>
</dbReference>
<dbReference type="Pfam" id="PF05153">
    <property type="entry name" value="MIOX"/>
    <property type="match status" value="1"/>
</dbReference>
<dbReference type="SUPFAM" id="SSF109604">
    <property type="entry name" value="HD-domain/PDEase-like"/>
    <property type="match status" value="1"/>
</dbReference>
<reference key="1">
    <citation type="journal article" date="2005" name="Nature">
        <title>The genome of the social amoeba Dictyostelium discoideum.</title>
        <authorList>
            <person name="Eichinger L."/>
            <person name="Pachebat J.A."/>
            <person name="Gloeckner G."/>
            <person name="Rajandream M.A."/>
            <person name="Sucgang R."/>
            <person name="Berriman M."/>
            <person name="Song J."/>
            <person name="Olsen R."/>
            <person name="Szafranski K."/>
            <person name="Xu Q."/>
            <person name="Tunggal B."/>
            <person name="Kummerfeld S."/>
            <person name="Madera M."/>
            <person name="Konfortov B.A."/>
            <person name="Rivero F."/>
            <person name="Bankier A.T."/>
            <person name="Lehmann R."/>
            <person name="Hamlin N."/>
            <person name="Davies R."/>
            <person name="Gaudet P."/>
            <person name="Fey P."/>
            <person name="Pilcher K."/>
            <person name="Chen G."/>
            <person name="Saunders D."/>
            <person name="Sodergren E.J."/>
            <person name="Davis P."/>
            <person name="Kerhornou A."/>
            <person name="Nie X."/>
            <person name="Hall N."/>
            <person name="Anjard C."/>
            <person name="Hemphill L."/>
            <person name="Bason N."/>
            <person name="Farbrother P."/>
            <person name="Desany B."/>
            <person name="Just E."/>
            <person name="Morio T."/>
            <person name="Rost R."/>
            <person name="Churcher C.M."/>
            <person name="Cooper J."/>
            <person name="Haydock S."/>
            <person name="van Driessche N."/>
            <person name="Cronin A."/>
            <person name="Goodhead I."/>
            <person name="Muzny D.M."/>
            <person name="Mourier T."/>
            <person name="Pain A."/>
            <person name="Lu M."/>
            <person name="Harper D."/>
            <person name="Lindsay R."/>
            <person name="Hauser H."/>
            <person name="James K.D."/>
            <person name="Quiles M."/>
            <person name="Madan Babu M."/>
            <person name="Saito T."/>
            <person name="Buchrieser C."/>
            <person name="Wardroper A."/>
            <person name="Felder M."/>
            <person name="Thangavelu M."/>
            <person name="Johnson D."/>
            <person name="Knights A."/>
            <person name="Loulseged H."/>
            <person name="Mungall K.L."/>
            <person name="Oliver K."/>
            <person name="Price C."/>
            <person name="Quail M.A."/>
            <person name="Urushihara H."/>
            <person name="Hernandez J."/>
            <person name="Rabbinowitsch E."/>
            <person name="Steffen D."/>
            <person name="Sanders M."/>
            <person name="Ma J."/>
            <person name="Kohara Y."/>
            <person name="Sharp S."/>
            <person name="Simmonds M.N."/>
            <person name="Spiegler S."/>
            <person name="Tivey A."/>
            <person name="Sugano S."/>
            <person name="White B."/>
            <person name="Walker D."/>
            <person name="Woodward J.R."/>
            <person name="Winckler T."/>
            <person name="Tanaka Y."/>
            <person name="Shaulsky G."/>
            <person name="Schleicher M."/>
            <person name="Weinstock G.M."/>
            <person name="Rosenthal A."/>
            <person name="Cox E.C."/>
            <person name="Chisholm R.L."/>
            <person name="Gibbs R.A."/>
            <person name="Loomis W.F."/>
            <person name="Platzer M."/>
            <person name="Kay R.R."/>
            <person name="Williams J.G."/>
            <person name="Dear P.H."/>
            <person name="Noegel A.A."/>
            <person name="Barrell B.G."/>
            <person name="Kuspa A."/>
        </authorList>
    </citation>
    <scope>NUCLEOTIDE SEQUENCE [LARGE SCALE GENOMIC DNA]</scope>
    <source>
        <strain>AX4</strain>
    </source>
</reference>
<organism>
    <name type="scientific">Dictyostelium discoideum</name>
    <name type="common">Social amoeba</name>
    <dbReference type="NCBI Taxonomy" id="44689"/>
    <lineage>
        <taxon>Eukaryota</taxon>
        <taxon>Amoebozoa</taxon>
        <taxon>Evosea</taxon>
        <taxon>Eumycetozoa</taxon>
        <taxon>Dictyostelia</taxon>
        <taxon>Dictyosteliales</taxon>
        <taxon>Dictyosteliaceae</taxon>
        <taxon>Dictyostelium</taxon>
    </lineage>
</organism>
<evidence type="ECO:0000250" key="1"/>
<evidence type="ECO:0000305" key="2"/>
<name>MIOX_DICDI</name>
<proteinExistence type="inferred from homology"/>
<protein>
    <recommendedName>
        <fullName>Inositol oxygenase</fullName>
        <ecNumber>1.13.99.1</ecNumber>
    </recommendedName>
    <alternativeName>
        <fullName>Myo-inositol oxygenase</fullName>
        <shortName>MI oxygenase</shortName>
    </alternativeName>
</protein>